<reference key="1">
    <citation type="journal article" date="2009" name="Proc. Natl. Acad. Sci. U.S.A.">
        <title>Hamiltonella defensa, genome evolution of protective bacterial endosymbiont from pathogenic ancestors.</title>
        <authorList>
            <person name="Degnan P.H."/>
            <person name="Yu Y."/>
            <person name="Sisneros N."/>
            <person name="Wing R.A."/>
            <person name="Moran N.A."/>
        </authorList>
    </citation>
    <scope>NUCLEOTIDE SEQUENCE [LARGE SCALE GENOMIC DNA]</scope>
    <source>
        <strain>5AT</strain>
    </source>
</reference>
<name>RUVB_HAMD5</name>
<feature type="chain" id="PRO_1000201839" description="Holliday junction branch migration complex subunit RuvB">
    <location>
        <begin position="1"/>
        <end position="333"/>
    </location>
</feature>
<feature type="region of interest" description="Large ATPase domain (RuvB-L)" evidence="1">
    <location>
        <begin position="4"/>
        <end position="185"/>
    </location>
</feature>
<feature type="region of interest" description="Small ATPAse domain (RuvB-S)" evidence="1">
    <location>
        <begin position="186"/>
        <end position="256"/>
    </location>
</feature>
<feature type="region of interest" description="Head domain (RuvB-H)" evidence="1">
    <location>
        <begin position="259"/>
        <end position="333"/>
    </location>
</feature>
<feature type="binding site" evidence="1">
    <location>
        <position position="24"/>
    </location>
    <ligand>
        <name>ATP</name>
        <dbReference type="ChEBI" id="CHEBI:30616"/>
    </ligand>
</feature>
<feature type="binding site" evidence="1">
    <location>
        <position position="25"/>
    </location>
    <ligand>
        <name>ATP</name>
        <dbReference type="ChEBI" id="CHEBI:30616"/>
    </ligand>
</feature>
<feature type="binding site" evidence="1">
    <location>
        <position position="66"/>
    </location>
    <ligand>
        <name>ATP</name>
        <dbReference type="ChEBI" id="CHEBI:30616"/>
    </ligand>
</feature>
<feature type="binding site" evidence="1">
    <location>
        <position position="69"/>
    </location>
    <ligand>
        <name>ATP</name>
        <dbReference type="ChEBI" id="CHEBI:30616"/>
    </ligand>
</feature>
<feature type="binding site" evidence="1">
    <location>
        <position position="70"/>
    </location>
    <ligand>
        <name>ATP</name>
        <dbReference type="ChEBI" id="CHEBI:30616"/>
    </ligand>
</feature>
<feature type="binding site" evidence="1">
    <location>
        <position position="70"/>
    </location>
    <ligand>
        <name>Mg(2+)</name>
        <dbReference type="ChEBI" id="CHEBI:18420"/>
    </ligand>
</feature>
<feature type="binding site" evidence="1">
    <location>
        <position position="71"/>
    </location>
    <ligand>
        <name>ATP</name>
        <dbReference type="ChEBI" id="CHEBI:30616"/>
    </ligand>
</feature>
<feature type="binding site" evidence="1">
    <location>
        <begin position="132"/>
        <end position="134"/>
    </location>
    <ligand>
        <name>ATP</name>
        <dbReference type="ChEBI" id="CHEBI:30616"/>
    </ligand>
</feature>
<feature type="binding site" evidence="1">
    <location>
        <position position="175"/>
    </location>
    <ligand>
        <name>ATP</name>
        <dbReference type="ChEBI" id="CHEBI:30616"/>
    </ligand>
</feature>
<feature type="binding site" evidence="1">
    <location>
        <position position="185"/>
    </location>
    <ligand>
        <name>ATP</name>
        <dbReference type="ChEBI" id="CHEBI:30616"/>
    </ligand>
</feature>
<feature type="binding site" evidence="1">
    <location>
        <position position="222"/>
    </location>
    <ligand>
        <name>ATP</name>
        <dbReference type="ChEBI" id="CHEBI:30616"/>
    </ligand>
</feature>
<feature type="binding site" evidence="1">
    <location>
        <position position="295"/>
    </location>
    <ligand>
        <name>DNA</name>
        <dbReference type="ChEBI" id="CHEBI:16991"/>
    </ligand>
</feature>
<feature type="binding site" evidence="1">
    <location>
        <position position="314"/>
    </location>
    <ligand>
        <name>DNA</name>
        <dbReference type="ChEBI" id="CHEBI:16991"/>
    </ligand>
</feature>
<feature type="binding site" evidence="1">
    <location>
        <position position="319"/>
    </location>
    <ligand>
        <name>DNA</name>
        <dbReference type="ChEBI" id="CHEBI:16991"/>
    </ligand>
</feature>
<comment type="function">
    <text evidence="1">The RuvA-RuvB-RuvC complex processes Holliday junction (HJ) DNA during genetic recombination and DNA repair, while the RuvA-RuvB complex plays an important role in the rescue of blocked DNA replication forks via replication fork reversal (RFR). RuvA specifically binds to HJ cruciform DNA, conferring on it an open structure. The RuvB hexamer acts as an ATP-dependent pump, pulling dsDNA into and through the RuvAB complex. RuvB forms 2 homohexamers on either side of HJ DNA bound by 1 or 2 RuvA tetramers; 4 subunits per hexamer contact DNA at a time. Coordinated motions by a converter formed by DNA-disengaged RuvB subunits stimulates ATP hydrolysis and nucleotide exchange. Immobilization of the converter enables RuvB to convert the ATP-contained energy into a lever motion, pulling 2 nucleotides of DNA out of the RuvA tetramer per ATP hydrolyzed, thus driving DNA branch migration. The RuvB motors rotate together with the DNA substrate, which together with the progressing nucleotide cycle form the mechanistic basis for DNA recombination by continuous HJ branch migration. Branch migration allows RuvC to scan DNA until it finds its consensus sequence, where it cleaves and resolves cruciform DNA.</text>
</comment>
<comment type="catalytic activity">
    <reaction evidence="1">
        <text>ATP + H2O = ADP + phosphate + H(+)</text>
        <dbReference type="Rhea" id="RHEA:13065"/>
        <dbReference type="ChEBI" id="CHEBI:15377"/>
        <dbReference type="ChEBI" id="CHEBI:15378"/>
        <dbReference type="ChEBI" id="CHEBI:30616"/>
        <dbReference type="ChEBI" id="CHEBI:43474"/>
        <dbReference type="ChEBI" id="CHEBI:456216"/>
    </reaction>
</comment>
<comment type="subunit">
    <text evidence="1">Homohexamer. Forms an RuvA(8)-RuvB(12)-Holliday junction (HJ) complex. HJ DNA is sandwiched between 2 RuvA tetramers; dsDNA enters through RuvA and exits via RuvB. An RuvB hexamer assembles on each DNA strand where it exits the tetramer. Each RuvB hexamer is contacted by two RuvA subunits (via domain III) on 2 adjacent RuvB subunits; this complex drives branch migration. In the full resolvosome a probable DNA-RuvA(4)-RuvB(12)-RuvC(2) complex forms which resolves the HJ.</text>
</comment>
<comment type="subcellular location">
    <subcellularLocation>
        <location evidence="1">Cytoplasm</location>
    </subcellularLocation>
</comment>
<comment type="domain">
    <text evidence="1">Has 3 domains, the large (RuvB-L) and small ATPase (RuvB-S) domains and the C-terminal head (RuvB-H) domain. The head domain binds DNA, while the ATPase domains jointly bind ATP, ADP or are empty depending on the state of the subunit in the translocation cycle. During a single DNA translocation step the structure of each domain remains the same, but their relative positions change.</text>
</comment>
<comment type="similarity">
    <text evidence="1">Belongs to the RuvB family.</text>
</comment>
<proteinExistence type="inferred from homology"/>
<gene>
    <name evidence="1" type="primary">ruvB</name>
    <name type="ordered locus">HDEF_1939</name>
</gene>
<accession>C4K7I4</accession>
<protein>
    <recommendedName>
        <fullName evidence="1">Holliday junction branch migration complex subunit RuvB</fullName>
        <ecNumber evidence="1">3.6.4.-</ecNumber>
    </recommendedName>
</protein>
<sequence length="333" mass="37045">MIEIDRLVSTDVLNENEALVDRAIRPKRLDEYVGQSHVRDQMQIFIQAAKQRGDALDHLLIFGPPGLGKTTLANIVAHEMGVNLRTTSGPVLEKAGDLAALLTHLEPRDALFIDEIHRLSPVVEEILYPAMEDYQLDIMIGEGPGARSIKLDLPPFTLIGATTRAGSLTSPLRDRFGIVQRLEFYSVPDLEHIVSRSARCLQLPLTKNGAHQLALRSRGTPRIINRLLRRVRDFAEVKGEGKINTEIAIKALEMLNVDKEGLDYMDSKLLLAIIEKFQGGPVGLDNLAAAIGEERETIEDVLEPYLIQQGFIQRTPRGRIATQHAYQHFICGG</sequence>
<evidence type="ECO:0000255" key="1">
    <source>
        <dbReference type="HAMAP-Rule" id="MF_00016"/>
    </source>
</evidence>
<organism>
    <name type="scientific">Hamiltonella defensa subsp. Acyrthosiphon pisum (strain 5AT)</name>
    <dbReference type="NCBI Taxonomy" id="572265"/>
    <lineage>
        <taxon>Bacteria</taxon>
        <taxon>Pseudomonadati</taxon>
        <taxon>Pseudomonadota</taxon>
        <taxon>Gammaproteobacteria</taxon>
        <taxon>Enterobacterales</taxon>
        <taxon>Enterobacteriaceae</taxon>
        <taxon>aphid secondary symbionts</taxon>
        <taxon>Candidatus Hamiltonella</taxon>
    </lineage>
</organism>
<keyword id="KW-0067">ATP-binding</keyword>
<keyword id="KW-0963">Cytoplasm</keyword>
<keyword id="KW-0227">DNA damage</keyword>
<keyword id="KW-0233">DNA recombination</keyword>
<keyword id="KW-0234">DNA repair</keyword>
<keyword id="KW-0238">DNA-binding</keyword>
<keyword id="KW-0378">Hydrolase</keyword>
<keyword id="KW-0547">Nucleotide-binding</keyword>
<dbReference type="EC" id="3.6.4.-" evidence="1"/>
<dbReference type="EMBL" id="CP001277">
    <property type="protein sequence ID" value="ACQ68527.1"/>
    <property type="molecule type" value="Genomic_DNA"/>
</dbReference>
<dbReference type="RefSeq" id="WP_015874286.1">
    <property type="nucleotide sequence ID" value="NC_012751.1"/>
</dbReference>
<dbReference type="SMR" id="C4K7I4"/>
<dbReference type="STRING" id="572265.HDEF_1939"/>
<dbReference type="GeneID" id="66261510"/>
<dbReference type="KEGG" id="hde:HDEF_1939"/>
<dbReference type="eggNOG" id="COG2255">
    <property type="taxonomic scope" value="Bacteria"/>
</dbReference>
<dbReference type="HOGENOM" id="CLU_055599_1_0_6"/>
<dbReference type="Proteomes" id="UP000002334">
    <property type="component" value="Chromosome"/>
</dbReference>
<dbReference type="GO" id="GO:0005737">
    <property type="term" value="C:cytoplasm"/>
    <property type="evidence" value="ECO:0007669"/>
    <property type="project" value="UniProtKB-SubCell"/>
</dbReference>
<dbReference type="GO" id="GO:0048476">
    <property type="term" value="C:Holliday junction resolvase complex"/>
    <property type="evidence" value="ECO:0007669"/>
    <property type="project" value="UniProtKB-UniRule"/>
</dbReference>
<dbReference type="GO" id="GO:0005524">
    <property type="term" value="F:ATP binding"/>
    <property type="evidence" value="ECO:0007669"/>
    <property type="project" value="UniProtKB-UniRule"/>
</dbReference>
<dbReference type="GO" id="GO:0016887">
    <property type="term" value="F:ATP hydrolysis activity"/>
    <property type="evidence" value="ECO:0007669"/>
    <property type="project" value="InterPro"/>
</dbReference>
<dbReference type="GO" id="GO:0000400">
    <property type="term" value="F:four-way junction DNA binding"/>
    <property type="evidence" value="ECO:0007669"/>
    <property type="project" value="UniProtKB-UniRule"/>
</dbReference>
<dbReference type="GO" id="GO:0009378">
    <property type="term" value="F:four-way junction helicase activity"/>
    <property type="evidence" value="ECO:0007669"/>
    <property type="project" value="InterPro"/>
</dbReference>
<dbReference type="GO" id="GO:0006310">
    <property type="term" value="P:DNA recombination"/>
    <property type="evidence" value="ECO:0007669"/>
    <property type="project" value="UniProtKB-UniRule"/>
</dbReference>
<dbReference type="GO" id="GO:0006281">
    <property type="term" value="P:DNA repair"/>
    <property type="evidence" value="ECO:0007669"/>
    <property type="project" value="UniProtKB-UniRule"/>
</dbReference>
<dbReference type="CDD" id="cd00009">
    <property type="entry name" value="AAA"/>
    <property type="match status" value="1"/>
</dbReference>
<dbReference type="FunFam" id="1.10.10.10:FF:000086">
    <property type="entry name" value="Holliday junction ATP-dependent DNA helicase RuvB"/>
    <property type="match status" value="1"/>
</dbReference>
<dbReference type="FunFam" id="1.10.8.60:FF:000023">
    <property type="entry name" value="Holliday junction ATP-dependent DNA helicase RuvB"/>
    <property type="match status" value="1"/>
</dbReference>
<dbReference type="FunFam" id="3.40.50.300:FF:000073">
    <property type="entry name" value="Holliday junction ATP-dependent DNA helicase RuvB"/>
    <property type="match status" value="1"/>
</dbReference>
<dbReference type="Gene3D" id="1.10.8.60">
    <property type="match status" value="1"/>
</dbReference>
<dbReference type="Gene3D" id="3.40.50.300">
    <property type="entry name" value="P-loop containing nucleotide triphosphate hydrolases"/>
    <property type="match status" value="1"/>
</dbReference>
<dbReference type="Gene3D" id="1.10.10.10">
    <property type="entry name" value="Winged helix-like DNA-binding domain superfamily/Winged helix DNA-binding domain"/>
    <property type="match status" value="1"/>
</dbReference>
<dbReference type="HAMAP" id="MF_00016">
    <property type="entry name" value="DNA_HJ_migration_RuvB"/>
    <property type="match status" value="1"/>
</dbReference>
<dbReference type="InterPro" id="IPR003593">
    <property type="entry name" value="AAA+_ATPase"/>
</dbReference>
<dbReference type="InterPro" id="IPR041445">
    <property type="entry name" value="AAA_lid_4"/>
</dbReference>
<dbReference type="InterPro" id="IPR004605">
    <property type="entry name" value="DNA_helicase_Holl-junc_RuvB"/>
</dbReference>
<dbReference type="InterPro" id="IPR027417">
    <property type="entry name" value="P-loop_NTPase"/>
</dbReference>
<dbReference type="InterPro" id="IPR008824">
    <property type="entry name" value="RuvB-like_N"/>
</dbReference>
<dbReference type="InterPro" id="IPR008823">
    <property type="entry name" value="RuvB_C"/>
</dbReference>
<dbReference type="InterPro" id="IPR036388">
    <property type="entry name" value="WH-like_DNA-bd_sf"/>
</dbReference>
<dbReference type="InterPro" id="IPR036390">
    <property type="entry name" value="WH_DNA-bd_sf"/>
</dbReference>
<dbReference type="NCBIfam" id="NF000868">
    <property type="entry name" value="PRK00080.1"/>
    <property type="match status" value="1"/>
</dbReference>
<dbReference type="NCBIfam" id="TIGR00635">
    <property type="entry name" value="ruvB"/>
    <property type="match status" value="1"/>
</dbReference>
<dbReference type="PANTHER" id="PTHR42848">
    <property type="match status" value="1"/>
</dbReference>
<dbReference type="PANTHER" id="PTHR42848:SF1">
    <property type="entry name" value="HOLLIDAY JUNCTION BRANCH MIGRATION COMPLEX SUBUNIT RUVB"/>
    <property type="match status" value="1"/>
</dbReference>
<dbReference type="Pfam" id="PF17864">
    <property type="entry name" value="AAA_lid_4"/>
    <property type="match status" value="1"/>
</dbReference>
<dbReference type="Pfam" id="PF05491">
    <property type="entry name" value="RuvB_C"/>
    <property type="match status" value="1"/>
</dbReference>
<dbReference type="Pfam" id="PF05496">
    <property type="entry name" value="RuvB_N"/>
    <property type="match status" value="1"/>
</dbReference>
<dbReference type="SMART" id="SM00382">
    <property type="entry name" value="AAA"/>
    <property type="match status" value="1"/>
</dbReference>
<dbReference type="SUPFAM" id="SSF52540">
    <property type="entry name" value="P-loop containing nucleoside triphosphate hydrolases"/>
    <property type="match status" value="1"/>
</dbReference>
<dbReference type="SUPFAM" id="SSF46785">
    <property type="entry name" value="Winged helix' DNA-binding domain"/>
    <property type="match status" value="1"/>
</dbReference>